<proteinExistence type="inferred from homology"/>
<feature type="chain" id="PRO_1000006314" description="Serine hydroxymethyltransferase">
    <location>
        <begin position="1"/>
        <end position="417"/>
    </location>
</feature>
<feature type="binding site" evidence="1">
    <location>
        <position position="121"/>
    </location>
    <ligand>
        <name>(6S)-5,6,7,8-tetrahydrofolate</name>
        <dbReference type="ChEBI" id="CHEBI:57453"/>
    </ligand>
</feature>
<feature type="binding site" evidence="1">
    <location>
        <begin position="125"/>
        <end position="127"/>
    </location>
    <ligand>
        <name>(6S)-5,6,7,8-tetrahydrofolate</name>
        <dbReference type="ChEBI" id="CHEBI:57453"/>
    </ligand>
</feature>
<feature type="binding site" evidence="1">
    <location>
        <begin position="355"/>
        <end position="357"/>
    </location>
    <ligand>
        <name>(6S)-5,6,7,8-tetrahydrofolate</name>
        <dbReference type="ChEBI" id="CHEBI:57453"/>
    </ligand>
</feature>
<feature type="site" description="Plays an important role in substrate specificity" evidence="1">
    <location>
        <position position="228"/>
    </location>
</feature>
<feature type="modified residue" description="N6-(pyridoxal phosphate)lysine" evidence="1">
    <location>
        <position position="229"/>
    </location>
</feature>
<accession>A6WR52</accession>
<dbReference type="EC" id="2.1.2.1" evidence="1"/>
<dbReference type="EMBL" id="CP000753">
    <property type="protein sequence ID" value="ABS09291.1"/>
    <property type="molecule type" value="Genomic_DNA"/>
</dbReference>
<dbReference type="RefSeq" id="WP_012089826.1">
    <property type="nucleotide sequence ID" value="NC_009665.1"/>
</dbReference>
<dbReference type="SMR" id="A6WR52"/>
<dbReference type="KEGG" id="sbm:Shew185_3161"/>
<dbReference type="HOGENOM" id="CLU_022477_2_1_6"/>
<dbReference type="UniPathway" id="UPA00193"/>
<dbReference type="UniPathway" id="UPA00288">
    <property type="reaction ID" value="UER01023"/>
</dbReference>
<dbReference type="GO" id="GO:0005829">
    <property type="term" value="C:cytosol"/>
    <property type="evidence" value="ECO:0007669"/>
    <property type="project" value="TreeGrafter"/>
</dbReference>
<dbReference type="GO" id="GO:0004372">
    <property type="term" value="F:glycine hydroxymethyltransferase activity"/>
    <property type="evidence" value="ECO:0007669"/>
    <property type="project" value="UniProtKB-UniRule"/>
</dbReference>
<dbReference type="GO" id="GO:0030170">
    <property type="term" value="F:pyridoxal phosphate binding"/>
    <property type="evidence" value="ECO:0007669"/>
    <property type="project" value="UniProtKB-UniRule"/>
</dbReference>
<dbReference type="GO" id="GO:0019264">
    <property type="term" value="P:glycine biosynthetic process from serine"/>
    <property type="evidence" value="ECO:0007669"/>
    <property type="project" value="UniProtKB-UniRule"/>
</dbReference>
<dbReference type="GO" id="GO:0035999">
    <property type="term" value="P:tetrahydrofolate interconversion"/>
    <property type="evidence" value="ECO:0007669"/>
    <property type="project" value="UniProtKB-UniRule"/>
</dbReference>
<dbReference type="CDD" id="cd00378">
    <property type="entry name" value="SHMT"/>
    <property type="match status" value="1"/>
</dbReference>
<dbReference type="FunFam" id="3.40.640.10:FF:000001">
    <property type="entry name" value="Serine hydroxymethyltransferase"/>
    <property type="match status" value="1"/>
</dbReference>
<dbReference type="FunFam" id="3.90.1150.10:FF:000003">
    <property type="entry name" value="Serine hydroxymethyltransferase"/>
    <property type="match status" value="1"/>
</dbReference>
<dbReference type="Gene3D" id="3.90.1150.10">
    <property type="entry name" value="Aspartate Aminotransferase, domain 1"/>
    <property type="match status" value="1"/>
</dbReference>
<dbReference type="Gene3D" id="3.40.640.10">
    <property type="entry name" value="Type I PLP-dependent aspartate aminotransferase-like (Major domain)"/>
    <property type="match status" value="1"/>
</dbReference>
<dbReference type="HAMAP" id="MF_00051">
    <property type="entry name" value="SHMT"/>
    <property type="match status" value="1"/>
</dbReference>
<dbReference type="InterPro" id="IPR015424">
    <property type="entry name" value="PyrdxlP-dep_Trfase"/>
</dbReference>
<dbReference type="InterPro" id="IPR015421">
    <property type="entry name" value="PyrdxlP-dep_Trfase_major"/>
</dbReference>
<dbReference type="InterPro" id="IPR015422">
    <property type="entry name" value="PyrdxlP-dep_Trfase_small"/>
</dbReference>
<dbReference type="InterPro" id="IPR001085">
    <property type="entry name" value="Ser_HO-MeTrfase"/>
</dbReference>
<dbReference type="InterPro" id="IPR049943">
    <property type="entry name" value="Ser_HO-MeTrfase-like"/>
</dbReference>
<dbReference type="InterPro" id="IPR019798">
    <property type="entry name" value="Ser_HO-MeTrfase_PLP_BS"/>
</dbReference>
<dbReference type="InterPro" id="IPR039429">
    <property type="entry name" value="SHMT-like_dom"/>
</dbReference>
<dbReference type="NCBIfam" id="NF000586">
    <property type="entry name" value="PRK00011.1"/>
    <property type="match status" value="1"/>
</dbReference>
<dbReference type="PANTHER" id="PTHR11680">
    <property type="entry name" value="SERINE HYDROXYMETHYLTRANSFERASE"/>
    <property type="match status" value="1"/>
</dbReference>
<dbReference type="PANTHER" id="PTHR11680:SF50">
    <property type="entry name" value="SERINE HYDROXYMETHYLTRANSFERASE"/>
    <property type="match status" value="1"/>
</dbReference>
<dbReference type="Pfam" id="PF00464">
    <property type="entry name" value="SHMT"/>
    <property type="match status" value="1"/>
</dbReference>
<dbReference type="PIRSF" id="PIRSF000412">
    <property type="entry name" value="SHMT"/>
    <property type="match status" value="1"/>
</dbReference>
<dbReference type="SUPFAM" id="SSF53383">
    <property type="entry name" value="PLP-dependent transferases"/>
    <property type="match status" value="1"/>
</dbReference>
<dbReference type="PROSITE" id="PS00096">
    <property type="entry name" value="SHMT"/>
    <property type="match status" value="1"/>
</dbReference>
<comment type="function">
    <text evidence="1">Catalyzes the reversible interconversion of serine and glycine with tetrahydrofolate (THF) serving as the one-carbon carrier. This reaction serves as the major source of one-carbon groups required for the biosynthesis of purines, thymidylate, methionine, and other important biomolecules. Also exhibits THF-independent aldolase activity toward beta-hydroxyamino acids, producing glycine and aldehydes, via a retro-aldol mechanism.</text>
</comment>
<comment type="catalytic activity">
    <reaction evidence="1">
        <text>(6R)-5,10-methylene-5,6,7,8-tetrahydrofolate + glycine + H2O = (6S)-5,6,7,8-tetrahydrofolate + L-serine</text>
        <dbReference type="Rhea" id="RHEA:15481"/>
        <dbReference type="ChEBI" id="CHEBI:15377"/>
        <dbReference type="ChEBI" id="CHEBI:15636"/>
        <dbReference type="ChEBI" id="CHEBI:33384"/>
        <dbReference type="ChEBI" id="CHEBI:57305"/>
        <dbReference type="ChEBI" id="CHEBI:57453"/>
        <dbReference type="EC" id="2.1.2.1"/>
    </reaction>
</comment>
<comment type="cofactor">
    <cofactor evidence="1">
        <name>pyridoxal 5'-phosphate</name>
        <dbReference type="ChEBI" id="CHEBI:597326"/>
    </cofactor>
</comment>
<comment type="pathway">
    <text evidence="1">One-carbon metabolism; tetrahydrofolate interconversion.</text>
</comment>
<comment type="pathway">
    <text evidence="1">Amino-acid biosynthesis; glycine biosynthesis; glycine from L-serine: step 1/1.</text>
</comment>
<comment type="subunit">
    <text evidence="1">Homodimer.</text>
</comment>
<comment type="subcellular location">
    <subcellularLocation>
        <location evidence="1">Cytoplasm</location>
    </subcellularLocation>
</comment>
<comment type="similarity">
    <text evidence="1">Belongs to the SHMT family.</text>
</comment>
<gene>
    <name evidence="1" type="primary">glyA</name>
    <name type="ordered locus">Shew185_3161</name>
</gene>
<name>GLYA_SHEB8</name>
<sequence>MLKKDMNIADYDPELFKAIQNETLRQEEHIELIASENYTSPRVMEAQGSQLTNKYAEGYPGKRYYGGCEYVDVVETLAIERAKELFSATYANVQPHSGSQANSAVYMALLKPGDTVLGMNLAHGGHLTHGSPVNFSGKLYNIIPYGIDESGKIDYDEMERLAVEHKPKMMIGGFSAYSGIVDWAKMREIADKIGAYLFVDMAHVAGLIAAGVYPNPVPHAHVVTSTTHKTLAGPRGGVILSAADDEDLYKKLNSAVFPGGQGGPLMHVIAGKAVAFKEALEPEFKVYQQQVVNNAKAMVEVFLERGYKIVSGGTSNHLMLVDLIGRDLTGKEADAALGSANITVNKNSVPNDPRSPFVTSGVRIGTPAITRRGFKEAESKELTGWICDILDDANNPAVIERVKGQVLALCARFPVYG</sequence>
<protein>
    <recommendedName>
        <fullName evidence="1">Serine hydroxymethyltransferase</fullName>
        <shortName evidence="1">SHMT</shortName>
        <shortName evidence="1">Serine methylase</shortName>
        <ecNumber evidence="1">2.1.2.1</ecNumber>
    </recommendedName>
</protein>
<organism>
    <name type="scientific">Shewanella baltica (strain OS185)</name>
    <dbReference type="NCBI Taxonomy" id="402882"/>
    <lineage>
        <taxon>Bacteria</taxon>
        <taxon>Pseudomonadati</taxon>
        <taxon>Pseudomonadota</taxon>
        <taxon>Gammaproteobacteria</taxon>
        <taxon>Alteromonadales</taxon>
        <taxon>Shewanellaceae</taxon>
        <taxon>Shewanella</taxon>
    </lineage>
</organism>
<evidence type="ECO:0000255" key="1">
    <source>
        <dbReference type="HAMAP-Rule" id="MF_00051"/>
    </source>
</evidence>
<reference key="1">
    <citation type="submission" date="2007-07" db="EMBL/GenBank/DDBJ databases">
        <title>Complete sequence of chromosome of Shewanella baltica OS185.</title>
        <authorList>
            <consortium name="US DOE Joint Genome Institute"/>
            <person name="Copeland A."/>
            <person name="Lucas S."/>
            <person name="Lapidus A."/>
            <person name="Barry K."/>
            <person name="Glavina del Rio T."/>
            <person name="Dalin E."/>
            <person name="Tice H."/>
            <person name="Pitluck S."/>
            <person name="Sims D."/>
            <person name="Brettin T."/>
            <person name="Bruce D."/>
            <person name="Detter J.C."/>
            <person name="Han C."/>
            <person name="Schmutz J."/>
            <person name="Larimer F."/>
            <person name="Land M."/>
            <person name="Hauser L."/>
            <person name="Kyrpides N."/>
            <person name="Mikhailova N."/>
            <person name="Brettar I."/>
            <person name="Rodrigues J."/>
            <person name="Konstantinidis K."/>
            <person name="Tiedje J."/>
            <person name="Richardson P."/>
        </authorList>
    </citation>
    <scope>NUCLEOTIDE SEQUENCE [LARGE SCALE GENOMIC DNA]</scope>
    <source>
        <strain>OS185</strain>
    </source>
</reference>
<keyword id="KW-0028">Amino-acid biosynthesis</keyword>
<keyword id="KW-0963">Cytoplasm</keyword>
<keyword id="KW-0554">One-carbon metabolism</keyword>
<keyword id="KW-0663">Pyridoxal phosphate</keyword>
<keyword id="KW-0808">Transferase</keyword>